<geneLocation type="plasmid">
    <name>megaplasmid pHG1</name>
</geneLocation>
<sequence length="227" mass="23653">MPARSPEPLPDHSSVCSPGCADLPILAASGLGFSRAGRVVFSGIDLALGPGDLLQVLGANGSGKTSLLRVLSGLVAPDEGELHWRGRPVRAGDPSLLQALAYVGHANGIDPELSPVENLRFAARLAGVAATPDNVQAALAAFGLERVMHAPARSLSQGLRRRAALARLALARRELWLLDEPVTSLDADAAARFQAQLDDHLRAGGMAIVATHALLPGARTLRLDARS</sequence>
<evidence type="ECO:0000255" key="1">
    <source>
        <dbReference type="HAMAP-Rule" id="MF_01707"/>
    </source>
</evidence>
<organism>
    <name type="scientific">Cupriavidus necator (strain ATCC 17699 / DSM 428 / KCTC 22496 / NCIMB 10442 / H16 / Stanier 337)</name>
    <name type="common">Ralstonia eutropha</name>
    <dbReference type="NCBI Taxonomy" id="381666"/>
    <lineage>
        <taxon>Bacteria</taxon>
        <taxon>Pseudomonadati</taxon>
        <taxon>Pseudomonadota</taxon>
        <taxon>Betaproteobacteria</taxon>
        <taxon>Burkholderiales</taxon>
        <taxon>Burkholderiaceae</taxon>
        <taxon>Cupriavidus</taxon>
    </lineage>
</organism>
<comment type="function">
    <text evidence="1">Part of the ABC transporter complex CcmAB involved in the biogenesis of c-type cytochromes; once thought to export heme, this seems not to be the case, but its exact role is uncertain. Responsible for energy coupling to the transport system.</text>
</comment>
<comment type="catalytic activity">
    <reaction evidence="1">
        <text>heme b(in) + ATP + H2O = heme b(out) + ADP + phosphate + H(+)</text>
        <dbReference type="Rhea" id="RHEA:19261"/>
        <dbReference type="ChEBI" id="CHEBI:15377"/>
        <dbReference type="ChEBI" id="CHEBI:15378"/>
        <dbReference type="ChEBI" id="CHEBI:30616"/>
        <dbReference type="ChEBI" id="CHEBI:43474"/>
        <dbReference type="ChEBI" id="CHEBI:60344"/>
        <dbReference type="ChEBI" id="CHEBI:456216"/>
        <dbReference type="EC" id="7.6.2.5"/>
    </reaction>
</comment>
<comment type="subunit">
    <text evidence="1">The complex is composed of two ATP-binding proteins (CcmA) and two transmembrane proteins (CcmB).</text>
</comment>
<comment type="subcellular location">
    <subcellularLocation>
        <location evidence="1">Cell inner membrane</location>
        <topology evidence="1">Peripheral membrane protein</topology>
    </subcellularLocation>
</comment>
<comment type="similarity">
    <text evidence="1">Belongs to the ABC transporter superfamily. CcmA exporter (TC 3.A.1.107) family.</text>
</comment>
<proteinExistence type="inferred from homology"/>
<accession>Q7WXC1</accession>
<protein>
    <recommendedName>
        <fullName evidence="1">Cytochrome c biogenesis ATP-binding export protein CcmA</fullName>
        <ecNumber evidence="1">7.6.2.5</ecNumber>
    </recommendedName>
    <alternativeName>
        <fullName evidence="1">Heme exporter protein A</fullName>
    </alternativeName>
</protein>
<feature type="chain" id="PRO_0000092166" description="Cytochrome c biogenesis ATP-binding export protein CcmA">
    <location>
        <begin position="1"/>
        <end position="227"/>
    </location>
</feature>
<feature type="domain" description="ABC transporter" evidence="1">
    <location>
        <begin position="26"/>
        <end position="227"/>
    </location>
</feature>
<feature type="binding site" evidence="1">
    <location>
        <begin position="58"/>
        <end position="65"/>
    </location>
    <ligand>
        <name>ATP</name>
        <dbReference type="ChEBI" id="CHEBI:30616"/>
    </ligand>
</feature>
<reference key="1">
    <citation type="journal article" date="2003" name="J. Mol. Biol.">
        <title>Complete nucleotide sequence of pHG1: a Ralstonia eutropha H16 megaplasmid encoding key enzymes of H(2)-based lithoautotrophy and anaerobiosis.</title>
        <authorList>
            <person name="Schwartz E."/>
            <person name="Henne A."/>
            <person name="Cramm R."/>
            <person name="Eitinger T."/>
            <person name="Friedrich B."/>
            <person name="Gottschalk G."/>
        </authorList>
    </citation>
    <scope>NUCLEOTIDE SEQUENCE [LARGE SCALE GENOMIC DNA]</scope>
    <source>
        <strain>ATCC 17699 / DSM 428 / KCTC 22496 / NCIMB 10442 / H16 / Stanier 337</strain>
    </source>
</reference>
<keyword id="KW-0067">ATP-binding</keyword>
<keyword id="KW-0997">Cell inner membrane</keyword>
<keyword id="KW-1003">Cell membrane</keyword>
<keyword id="KW-0201">Cytochrome c-type biogenesis</keyword>
<keyword id="KW-0472">Membrane</keyword>
<keyword id="KW-0547">Nucleotide-binding</keyword>
<keyword id="KW-0614">Plasmid</keyword>
<keyword id="KW-1185">Reference proteome</keyword>
<keyword id="KW-1278">Translocase</keyword>
<keyword id="KW-0813">Transport</keyword>
<gene>
    <name evidence="1" type="primary">ccmA</name>
    <name type="ordered locus">PHG214</name>
</gene>
<dbReference type="EC" id="7.6.2.5" evidence="1"/>
<dbReference type="EMBL" id="AY305378">
    <property type="protein sequence ID" value="AAP85966.1"/>
    <property type="molecule type" value="Genomic_DNA"/>
</dbReference>
<dbReference type="SMR" id="Q7WXC1"/>
<dbReference type="KEGG" id="reh:PHG214"/>
<dbReference type="eggNOG" id="COG4133">
    <property type="taxonomic scope" value="Bacteria"/>
</dbReference>
<dbReference type="HOGENOM" id="CLU_000604_1_2_4"/>
<dbReference type="Proteomes" id="UP000008210">
    <property type="component" value="Plasmid megaplasmid pHG1"/>
</dbReference>
<dbReference type="GO" id="GO:0005886">
    <property type="term" value="C:plasma membrane"/>
    <property type="evidence" value="ECO:0007669"/>
    <property type="project" value="UniProtKB-SubCell"/>
</dbReference>
<dbReference type="GO" id="GO:0015439">
    <property type="term" value="F:ABC-type heme transporter activity"/>
    <property type="evidence" value="ECO:0007669"/>
    <property type="project" value="UniProtKB-EC"/>
</dbReference>
<dbReference type="GO" id="GO:0005524">
    <property type="term" value="F:ATP binding"/>
    <property type="evidence" value="ECO:0007669"/>
    <property type="project" value="UniProtKB-KW"/>
</dbReference>
<dbReference type="GO" id="GO:0016887">
    <property type="term" value="F:ATP hydrolysis activity"/>
    <property type="evidence" value="ECO:0007669"/>
    <property type="project" value="InterPro"/>
</dbReference>
<dbReference type="GO" id="GO:0017004">
    <property type="term" value="P:cytochrome complex assembly"/>
    <property type="evidence" value="ECO:0007669"/>
    <property type="project" value="UniProtKB-KW"/>
</dbReference>
<dbReference type="Gene3D" id="3.40.50.300">
    <property type="entry name" value="P-loop containing nucleotide triphosphate hydrolases"/>
    <property type="match status" value="1"/>
</dbReference>
<dbReference type="InterPro" id="IPR003593">
    <property type="entry name" value="AAA+_ATPase"/>
</dbReference>
<dbReference type="InterPro" id="IPR003439">
    <property type="entry name" value="ABC_transporter-like_ATP-bd"/>
</dbReference>
<dbReference type="InterPro" id="IPR005895">
    <property type="entry name" value="ABC_transptr_haem_export_CcmA"/>
</dbReference>
<dbReference type="InterPro" id="IPR027417">
    <property type="entry name" value="P-loop_NTPase"/>
</dbReference>
<dbReference type="NCBIfam" id="TIGR01189">
    <property type="entry name" value="ccmA"/>
    <property type="match status" value="1"/>
</dbReference>
<dbReference type="NCBIfam" id="NF010061">
    <property type="entry name" value="PRK13538.1"/>
    <property type="match status" value="1"/>
</dbReference>
<dbReference type="PANTHER" id="PTHR43499">
    <property type="entry name" value="ABC TRANSPORTER I FAMILY MEMBER 1"/>
    <property type="match status" value="1"/>
</dbReference>
<dbReference type="PANTHER" id="PTHR43499:SF1">
    <property type="entry name" value="ABC TRANSPORTER I FAMILY MEMBER 1"/>
    <property type="match status" value="1"/>
</dbReference>
<dbReference type="Pfam" id="PF00005">
    <property type="entry name" value="ABC_tran"/>
    <property type="match status" value="1"/>
</dbReference>
<dbReference type="SMART" id="SM00382">
    <property type="entry name" value="AAA"/>
    <property type="match status" value="1"/>
</dbReference>
<dbReference type="SUPFAM" id="SSF52540">
    <property type="entry name" value="P-loop containing nucleoside triphosphate hydrolases"/>
    <property type="match status" value="1"/>
</dbReference>
<dbReference type="PROSITE" id="PS50893">
    <property type="entry name" value="ABC_TRANSPORTER_2"/>
    <property type="match status" value="1"/>
</dbReference>
<dbReference type="PROSITE" id="PS51243">
    <property type="entry name" value="CCMA"/>
    <property type="match status" value="1"/>
</dbReference>
<name>CCMA_CUPNH</name>